<name>NRDR_KINRD</name>
<protein>
    <recommendedName>
        <fullName evidence="1">Transcriptional repressor NrdR</fullName>
    </recommendedName>
</protein>
<sequence>MHCPFCRHDDSRVVDSRTTDDGSSIRRRRQCPNCSKRFSTVETASLSVIKRSGAPEPFSRAKIASGVRKACQGRPVSEDDIALLAHRVEEAVRAQGAAEIDAHQVGLATLPFLQELDEVAYLRFASVYQAFDSLADFESAIDRLRAQRAAVAVPPVEPVAARG</sequence>
<organism>
    <name type="scientific">Kineococcus radiotolerans (strain ATCC BAA-149 / DSM 14245 / SRS30216)</name>
    <dbReference type="NCBI Taxonomy" id="266940"/>
    <lineage>
        <taxon>Bacteria</taxon>
        <taxon>Bacillati</taxon>
        <taxon>Actinomycetota</taxon>
        <taxon>Actinomycetes</taxon>
        <taxon>Kineosporiales</taxon>
        <taxon>Kineosporiaceae</taxon>
        <taxon>Kineococcus</taxon>
    </lineage>
</organism>
<accession>A6W857</accession>
<feature type="chain" id="PRO_1000080760" description="Transcriptional repressor NrdR">
    <location>
        <begin position="1"/>
        <end position="163"/>
    </location>
</feature>
<feature type="domain" description="ATP-cone" evidence="1">
    <location>
        <begin position="46"/>
        <end position="136"/>
    </location>
</feature>
<feature type="zinc finger region" evidence="1">
    <location>
        <begin position="3"/>
        <end position="34"/>
    </location>
</feature>
<evidence type="ECO:0000255" key="1">
    <source>
        <dbReference type="HAMAP-Rule" id="MF_00440"/>
    </source>
</evidence>
<reference key="1">
    <citation type="journal article" date="2008" name="PLoS ONE">
        <title>Survival in nuclear waste, extreme resistance, and potential applications gleaned from the genome sequence of Kineococcus radiotolerans SRS30216.</title>
        <authorList>
            <person name="Bagwell C.E."/>
            <person name="Bhat S."/>
            <person name="Hawkins G.M."/>
            <person name="Smith B.W."/>
            <person name="Biswas T."/>
            <person name="Hoover T.R."/>
            <person name="Saunders E."/>
            <person name="Han C.S."/>
            <person name="Tsodikov O.V."/>
            <person name="Shimkets L.J."/>
        </authorList>
    </citation>
    <scope>NUCLEOTIDE SEQUENCE [LARGE SCALE GENOMIC DNA]</scope>
    <source>
        <strain>ATCC BAA-149 / DSM 14245 / SRS30216</strain>
    </source>
</reference>
<gene>
    <name evidence="1" type="primary">nrdR</name>
    <name type="ordered locus">Krad_1508</name>
</gene>
<keyword id="KW-0067">ATP-binding</keyword>
<keyword id="KW-0238">DNA-binding</keyword>
<keyword id="KW-0479">Metal-binding</keyword>
<keyword id="KW-0547">Nucleotide-binding</keyword>
<keyword id="KW-1185">Reference proteome</keyword>
<keyword id="KW-0678">Repressor</keyword>
<keyword id="KW-0804">Transcription</keyword>
<keyword id="KW-0805">Transcription regulation</keyword>
<keyword id="KW-0862">Zinc</keyword>
<keyword id="KW-0863">Zinc-finger</keyword>
<proteinExistence type="inferred from homology"/>
<dbReference type="EMBL" id="CP000750">
    <property type="protein sequence ID" value="ABS02996.1"/>
    <property type="molecule type" value="Genomic_DNA"/>
</dbReference>
<dbReference type="SMR" id="A6W857"/>
<dbReference type="STRING" id="266940.Krad_1508"/>
<dbReference type="KEGG" id="kra:Krad_1508"/>
<dbReference type="eggNOG" id="COG1327">
    <property type="taxonomic scope" value="Bacteria"/>
</dbReference>
<dbReference type="HOGENOM" id="CLU_108412_1_0_11"/>
<dbReference type="OrthoDB" id="9807461at2"/>
<dbReference type="Proteomes" id="UP000001116">
    <property type="component" value="Chromosome"/>
</dbReference>
<dbReference type="GO" id="GO:0005524">
    <property type="term" value="F:ATP binding"/>
    <property type="evidence" value="ECO:0007669"/>
    <property type="project" value="UniProtKB-KW"/>
</dbReference>
<dbReference type="GO" id="GO:0003677">
    <property type="term" value="F:DNA binding"/>
    <property type="evidence" value="ECO:0007669"/>
    <property type="project" value="UniProtKB-KW"/>
</dbReference>
<dbReference type="GO" id="GO:0008270">
    <property type="term" value="F:zinc ion binding"/>
    <property type="evidence" value="ECO:0007669"/>
    <property type="project" value="UniProtKB-UniRule"/>
</dbReference>
<dbReference type="GO" id="GO:0045892">
    <property type="term" value="P:negative regulation of DNA-templated transcription"/>
    <property type="evidence" value="ECO:0007669"/>
    <property type="project" value="UniProtKB-UniRule"/>
</dbReference>
<dbReference type="HAMAP" id="MF_00440">
    <property type="entry name" value="NrdR"/>
    <property type="match status" value="1"/>
</dbReference>
<dbReference type="InterPro" id="IPR005144">
    <property type="entry name" value="ATP-cone_dom"/>
</dbReference>
<dbReference type="InterPro" id="IPR055173">
    <property type="entry name" value="NrdR-like_N"/>
</dbReference>
<dbReference type="InterPro" id="IPR003796">
    <property type="entry name" value="RNR_NrdR-like"/>
</dbReference>
<dbReference type="NCBIfam" id="TIGR00244">
    <property type="entry name" value="transcriptional regulator NrdR"/>
    <property type="match status" value="1"/>
</dbReference>
<dbReference type="PANTHER" id="PTHR30455">
    <property type="entry name" value="TRANSCRIPTIONAL REPRESSOR NRDR"/>
    <property type="match status" value="1"/>
</dbReference>
<dbReference type="PANTHER" id="PTHR30455:SF2">
    <property type="entry name" value="TRANSCRIPTIONAL REPRESSOR NRDR"/>
    <property type="match status" value="1"/>
</dbReference>
<dbReference type="Pfam" id="PF03477">
    <property type="entry name" value="ATP-cone"/>
    <property type="match status" value="1"/>
</dbReference>
<dbReference type="Pfam" id="PF22811">
    <property type="entry name" value="Zn_ribbon_NrdR"/>
    <property type="match status" value="1"/>
</dbReference>
<dbReference type="PROSITE" id="PS51161">
    <property type="entry name" value="ATP_CONE"/>
    <property type="match status" value="1"/>
</dbReference>
<comment type="function">
    <text evidence="1">Negatively regulates transcription of bacterial ribonucleotide reductase nrd genes and operons by binding to NrdR-boxes.</text>
</comment>
<comment type="cofactor">
    <cofactor evidence="1">
        <name>Zn(2+)</name>
        <dbReference type="ChEBI" id="CHEBI:29105"/>
    </cofactor>
    <text evidence="1">Binds 1 zinc ion.</text>
</comment>
<comment type="similarity">
    <text evidence="1">Belongs to the NrdR family.</text>
</comment>